<proteinExistence type="evidence at protein level"/>
<feature type="chain" id="PRO_0000119105" description="Kelch-like protein 5">
    <location>
        <begin position="1"/>
        <end position="755"/>
    </location>
</feature>
<feature type="domain" description="BTB" evidence="1">
    <location>
        <begin position="220"/>
        <end position="287"/>
    </location>
</feature>
<feature type="repeat" description="Kelch 1">
    <location>
        <begin position="468"/>
        <end position="514"/>
    </location>
</feature>
<feature type="repeat" description="Kelch 2">
    <location>
        <begin position="515"/>
        <end position="561"/>
    </location>
</feature>
<feature type="repeat" description="Kelch 3">
    <location>
        <begin position="563"/>
        <end position="608"/>
    </location>
</feature>
<feature type="repeat" description="Kelch 4">
    <location>
        <begin position="609"/>
        <end position="655"/>
    </location>
</feature>
<feature type="repeat" description="Kelch 5">
    <location>
        <begin position="657"/>
        <end position="708"/>
    </location>
</feature>
<feature type="repeat" description="Kelch 6">
    <location>
        <begin position="709"/>
        <end position="754"/>
    </location>
</feature>
<feature type="region of interest" description="Disordered" evidence="2">
    <location>
        <begin position="152"/>
        <end position="184"/>
    </location>
</feature>
<feature type="compositionally biased region" description="Acidic residues" evidence="2">
    <location>
        <begin position="158"/>
        <end position="168"/>
    </location>
</feature>
<feature type="compositionally biased region" description="Low complexity" evidence="2">
    <location>
        <begin position="169"/>
        <end position="184"/>
    </location>
</feature>
<feature type="splice variant" id="VSP_047111" description="In isoform 5." evidence="10">
    <location>
        <begin position="1"/>
        <end position="187"/>
    </location>
</feature>
<feature type="splice variant" id="VSP_047112" description="In isoform 6." evidence="10">
    <location>
        <begin position="1"/>
        <end position="46"/>
    </location>
</feature>
<feature type="splice variant" id="VSP_045227" description="In isoform 4." evidence="7">
    <location>
        <begin position="174"/>
        <end position="234"/>
    </location>
</feature>
<feature type="splice variant" id="VSP_008619" description="In isoform 2." evidence="8">
    <original>APLCLGRAGACVVTVKL</original>
    <variation>WHSCFIITLTLFLLKQFLW</variation>
    <location>
        <begin position="739"/>
        <end position="755"/>
    </location>
</feature>
<feature type="splice variant" id="VSP_008620" description="In isoform 3." evidence="9">
    <original>APLCLGRAGACVVTVKL</original>
    <variation>FSHTFEDSKDHLVAIKQTIWRQNSLSEEFRSH</variation>
    <location>
        <begin position="739"/>
        <end position="755"/>
    </location>
</feature>
<feature type="sequence variant" id="VAR_050048" description="In dbSNP:rs2711941." evidence="3 4 5 6">
    <original>I</original>
    <variation>L</variation>
    <location>
        <position position="10"/>
    </location>
</feature>
<feature type="sequence variant" id="VAR_033985" description="In dbSNP:rs34646863.">
    <original>G</original>
    <variation>S</variation>
    <location>
        <position position="508"/>
    </location>
</feature>
<feature type="sequence conflict" description="In Ref. 2; AAO39710." evidence="10" ref="2">
    <original>P</original>
    <variation>S</variation>
    <location>
        <position position="129"/>
    </location>
</feature>
<feature type="sequence conflict" description="In Ref. 3; BAA91845." evidence="10" ref="3">
    <original>L</original>
    <variation>P</variation>
    <location>
        <position position="323"/>
    </location>
</feature>
<feature type="sequence conflict" description="In Ref. 2; AAO39710." evidence="10" ref="2">
    <original>E</original>
    <variation>G</variation>
    <location>
        <position position="351"/>
    </location>
</feature>
<feature type="sequence conflict" description="In Ref. 1; AAL08584." evidence="10" ref="1">
    <original>Q</original>
    <variation>R</variation>
    <location>
        <position position="435"/>
    </location>
</feature>
<feature type="sequence conflict" description="In Ref. 2; AAO39710." evidence="10" ref="2">
    <original>T</original>
    <variation>I</variation>
    <location>
        <position position="459"/>
    </location>
</feature>
<feature type="sequence conflict" description="In Ref. 3; BAA91845." evidence="10" ref="3">
    <original>M</original>
    <variation>K</variation>
    <location>
        <position position="594"/>
    </location>
</feature>
<feature type="sequence conflict" description="In Ref. 2; AAO39710." evidence="10" ref="2">
    <original>N</original>
    <variation>S</variation>
    <location>
        <position position="654"/>
    </location>
</feature>
<feature type="sequence conflict" description="In Ref. 3; BAA92121." evidence="10" ref="3">
    <original>S</original>
    <variation>G</variation>
    <location>
        <position position="695"/>
    </location>
</feature>
<protein>
    <recommendedName>
        <fullName>Kelch-like protein 5</fullName>
    </recommendedName>
</protein>
<keyword id="KW-0009">Actin-binding</keyword>
<keyword id="KW-0025">Alternative splicing</keyword>
<keyword id="KW-0963">Cytoplasm</keyword>
<keyword id="KW-0206">Cytoskeleton</keyword>
<keyword id="KW-0880">Kelch repeat</keyword>
<keyword id="KW-1267">Proteomics identification</keyword>
<keyword id="KW-1185">Reference proteome</keyword>
<keyword id="KW-0677">Repeat</keyword>
<comment type="interaction">
    <interactant intactId="EBI-2692595">
        <id>Q96PQ7</id>
    </interactant>
    <interactant intactId="EBI-456129">
        <id>Q13618</id>
        <label>CUL3</label>
    </interactant>
    <organismsDiffer>false</organismsDiffer>
    <experiments>8</experiments>
</comment>
<comment type="subcellular location">
    <subcellularLocation>
        <location>Cytoplasm</location>
        <location>Cytoskeleton</location>
    </subcellularLocation>
</comment>
<comment type="alternative products">
    <event type="alternative splicing"/>
    <isoform>
        <id>Q96PQ7-1</id>
        <name>1</name>
        <name>KLHL5a</name>
        <sequence type="displayed"/>
    </isoform>
    <isoform>
        <id>Q96PQ7-2</id>
        <name>2</name>
        <sequence type="described" ref="VSP_008619"/>
    </isoform>
    <isoform>
        <id>Q96PQ7-3</id>
        <name>3</name>
        <sequence type="described" ref="VSP_008620"/>
    </isoform>
    <isoform>
        <id>Q96PQ7-4</id>
        <name>4</name>
        <name>KLHL5b</name>
        <sequence type="described" ref="VSP_045227"/>
    </isoform>
    <isoform>
        <id>Q96PQ7-5</id>
        <name>5</name>
        <sequence type="described" ref="VSP_047111"/>
    </isoform>
    <isoform>
        <id>Q96PQ7-6</id>
        <name>6</name>
        <sequence type="described" ref="VSP_047112"/>
    </isoform>
</comment>
<comment type="tissue specificity">
    <text>Expressed in adrenal gland, ovary and thyroid gland and less abundantly in lymph node, prostate, spinal cord, testis and trachea.</text>
</comment>
<comment type="miscellaneous">
    <molecule>Isoform 2</molecule>
    <text evidence="10">May be due to intron retention.</text>
</comment>
<comment type="miscellaneous">
    <molecule>Isoform 4</molecule>
    <text evidence="10">Ubiquitous expression, differentially expressed in kidney and pancreas relatively to isoform 1.</text>
</comment>
<comment type="sequence caution" evidence="10">
    <conflict type="erroneous initiation">
        <sequence resource="EMBL-CDS" id="AAD32565"/>
    </conflict>
</comment>
<comment type="sequence caution" evidence="10">
    <conflict type="erroneous termination">
        <sequence resource="EMBL-CDS" id="AAL08584"/>
    </conflict>
    <text>Truncated C-terminus.</text>
</comment>
<comment type="sequence caution" evidence="10">
    <conflict type="erroneous initiation">
        <sequence resource="EMBL-CDS" id="BAA91845"/>
    </conflict>
</comment>
<comment type="sequence caution" evidence="10">
    <conflict type="erroneous initiation">
        <sequence resource="EMBL-CDS" id="BAA91933"/>
    </conflict>
</comment>
<comment type="sequence caution" evidence="10">
    <conflict type="erroneous initiation">
        <sequence resource="EMBL-CDS" id="BAA92121"/>
    </conflict>
</comment>
<name>KLHL5_HUMAN</name>
<sequence>MNVIYFPLHIFVVYSRAYTSLVLVGCTNLCAVLFARCLDDHLVSLRMSGSRKEFDVKQILKIRWRWFGHQASSPNSTVDSQQGEFWNRGQTGANGGRKFLDPCSLQLPLASIGYRRSSQLDFQNSPSWPMASTSEVPAFEFTAEDCGGAHWLDRPEVDDGTSEEENESDSSSCRTSNSSQTLSSCHTMEPCTSDEFFQALNHAEQTFKKMENYLRHKQLCDVILVAGDRRIPAHRLVLSSVSDYFAAMFTNDVREARQEEIKMEGVEPNSLWSLIQYAYTGRLELKEDNIECLLSTACLLQLSQVVEACCKFLMKQLHPSNCLGIRSFADAQGCTDLHKVAHNYTMEHFMEVIRNQEFVLLPASEIAKLLASDDMNIPNEETILNALLTWVRHDLEQRRKDLSKLLAYIRLPLLAPQFLADMENNVLFRDDIECQKLIMEAMKYHLLPERRPMLQSPRTKPRKSTVGTLFAVGGMDSTKGATSIEKYDLRTNMWTPVANMNGRRLQFGVAVLDDKLYVVGGRDGLKTLNTVECYNPKTKTWSVMPPMSTHRHGLGVAVLEGPMYAVGGHDGWSYLNTVERWDPQARQWNFVATMSTPRSTVGVAVLSGKLYAVGGRDGSSCLKSVECFDPHTNKWTLCAQMSKRRGGVGVTTWNGLLYAIGGHDAPASNLTSRLSDCVERYDPKTDMWTAVASMSISRDAVGVCLLGDKLYAVGGYDGQAYLNTVEAYDPQTNEWTQVAPLCLGRAGACVVTVKL</sequence>
<organism>
    <name type="scientific">Homo sapiens</name>
    <name type="common">Human</name>
    <dbReference type="NCBI Taxonomy" id="9606"/>
    <lineage>
        <taxon>Eukaryota</taxon>
        <taxon>Metazoa</taxon>
        <taxon>Chordata</taxon>
        <taxon>Craniata</taxon>
        <taxon>Vertebrata</taxon>
        <taxon>Euteleostomi</taxon>
        <taxon>Mammalia</taxon>
        <taxon>Eutheria</taxon>
        <taxon>Euarchontoglires</taxon>
        <taxon>Primates</taxon>
        <taxon>Haplorrhini</taxon>
        <taxon>Catarrhini</taxon>
        <taxon>Hominidae</taxon>
        <taxon>Homo</taxon>
    </lineage>
</organism>
<dbReference type="EMBL" id="AF272976">
    <property type="protein sequence ID" value="AAL08584.1"/>
    <property type="status" value="ALT_SEQ"/>
    <property type="molecule type" value="mRNA"/>
</dbReference>
<dbReference type="EMBL" id="AY172948">
    <property type="protein sequence ID" value="AAO39710.1"/>
    <property type="molecule type" value="mRNA"/>
</dbReference>
<dbReference type="EMBL" id="AK001698">
    <property type="protein sequence ID" value="BAA91845.1"/>
    <property type="status" value="ALT_INIT"/>
    <property type="molecule type" value="mRNA"/>
</dbReference>
<dbReference type="EMBL" id="AK001836">
    <property type="protein sequence ID" value="BAA91933.1"/>
    <property type="status" value="ALT_INIT"/>
    <property type="molecule type" value="mRNA"/>
</dbReference>
<dbReference type="EMBL" id="AK002174">
    <property type="protein sequence ID" value="BAA92121.1"/>
    <property type="status" value="ALT_INIT"/>
    <property type="molecule type" value="mRNA"/>
</dbReference>
<dbReference type="EMBL" id="AK289785">
    <property type="protein sequence ID" value="BAF82474.1"/>
    <property type="molecule type" value="mRNA"/>
</dbReference>
<dbReference type="EMBL" id="AC079921">
    <property type="status" value="NOT_ANNOTATED_CDS"/>
    <property type="molecule type" value="Genomic_DNA"/>
</dbReference>
<dbReference type="EMBL" id="CH471069">
    <property type="protein sequence ID" value="EAW92908.1"/>
    <property type="molecule type" value="Genomic_DNA"/>
</dbReference>
<dbReference type="EMBL" id="CH471069">
    <property type="protein sequence ID" value="EAW92911.1"/>
    <property type="molecule type" value="Genomic_DNA"/>
</dbReference>
<dbReference type="EMBL" id="BC048262">
    <property type="protein sequence ID" value="AAH48262.1"/>
    <property type="molecule type" value="mRNA"/>
</dbReference>
<dbReference type="EMBL" id="AF123320">
    <property type="protein sequence ID" value="AAD32565.1"/>
    <property type="status" value="ALT_INIT"/>
    <property type="molecule type" value="mRNA"/>
</dbReference>
<dbReference type="CCDS" id="CCDS33975.1">
    <molecule id="Q96PQ7-6"/>
</dbReference>
<dbReference type="CCDS" id="CCDS54756.1">
    <molecule id="Q96PQ7-5"/>
</dbReference>
<dbReference type="RefSeq" id="NP_001007076.1">
    <molecule id="Q96PQ7-6"/>
    <property type="nucleotide sequence ID" value="NM_001007075.2"/>
</dbReference>
<dbReference type="RefSeq" id="NP_001165125.1">
    <molecule id="Q96PQ7-5"/>
    <property type="nucleotide sequence ID" value="NM_001171654.1"/>
</dbReference>
<dbReference type="RefSeq" id="NP_057074.3">
    <molecule id="Q96PQ7-6"/>
    <property type="nucleotide sequence ID" value="NM_015990.4"/>
</dbReference>
<dbReference type="RefSeq" id="NP_950240.2">
    <property type="nucleotide sequence ID" value="NM_199039.3"/>
</dbReference>
<dbReference type="RefSeq" id="XP_054206113.1">
    <molecule id="Q96PQ7-6"/>
    <property type="nucleotide sequence ID" value="XM_054350138.1"/>
</dbReference>
<dbReference type="SMR" id="Q96PQ7"/>
<dbReference type="BioGRID" id="119278">
    <property type="interactions" value="17"/>
</dbReference>
<dbReference type="ComplexPortal" id="CPX-8063">
    <property type="entry name" value="CRL3 E3 ubiquitin ligase complex, KLHL5 variant"/>
</dbReference>
<dbReference type="FunCoup" id="Q96PQ7">
    <property type="interactions" value="1396"/>
</dbReference>
<dbReference type="IntAct" id="Q96PQ7">
    <property type="interactions" value="17"/>
</dbReference>
<dbReference type="MINT" id="Q96PQ7"/>
<dbReference type="STRING" id="9606.ENSP00000423897"/>
<dbReference type="iPTMnet" id="Q96PQ7"/>
<dbReference type="PhosphoSitePlus" id="Q96PQ7"/>
<dbReference type="SwissPalm" id="Q96PQ7"/>
<dbReference type="BioMuta" id="KLHL5"/>
<dbReference type="DMDM" id="37999955"/>
<dbReference type="jPOST" id="Q96PQ7"/>
<dbReference type="MassIVE" id="Q96PQ7"/>
<dbReference type="PaxDb" id="9606-ENSP00000423897"/>
<dbReference type="PeptideAtlas" id="Q96PQ7"/>
<dbReference type="ProteomicsDB" id="19438"/>
<dbReference type="ProteomicsDB" id="30483"/>
<dbReference type="ProteomicsDB" id="33684"/>
<dbReference type="ProteomicsDB" id="77735">
    <molecule id="Q96PQ7-1"/>
</dbReference>
<dbReference type="ProteomicsDB" id="77736">
    <molecule id="Q96PQ7-2"/>
</dbReference>
<dbReference type="ProteomicsDB" id="77737">
    <molecule id="Q96PQ7-3"/>
</dbReference>
<dbReference type="Pumba" id="Q96PQ7"/>
<dbReference type="Antibodypedia" id="2325">
    <property type="antibodies" value="61 antibodies from 17 providers"/>
</dbReference>
<dbReference type="DNASU" id="51088"/>
<dbReference type="Ensembl" id="ENST00000261425.7">
    <molecule id="Q96PQ7-6"/>
    <property type="protein sequence ID" value="ENSP00000261425.3"/>
    <property type="gene ID" value="ENSG00000109790.18"/>
</dbReference>
<dbReference type="Ensembl" id="ENST00000504108.7">
    <molecule id="Q96PQ7-6"/>
    <property type="protein sequence ID" value="ENSP00000423897.2"/>
    <property type="gene ID" value="ENSG00000109790.18"/>
</dbReference>
<dbReference type="Ensembl" id="ENST00000508137.6">
    <molecule id="Q96PQ7-5"/>
    <property type="protein sequence ID" value="ENSP00000423080.2"/>
    <property type="gene ID" value="ENSG00000109790.18"/>
</dbReference>
<dbReference type="GeneID" id="51088"/>
<dbReference type="KEGG" id="hsa:51088"/>
<dbReference type="MANE-Select" id="ENST00000504108.7">
    <molecule id="Q96PQ7-6"/>
    <property type="protein sequence ID" value="ENSP00000423897.2"/>
    <property type="RefSeq nucleotide sequence ID" value="NM_015990.5"/>
    <property type="RefSeq protein sequence ID" value="NP_057074.4"/>
</dbReference>
<dbReference type="UCSC" id="uc003gtp.4">
    <molecule id="Q96PQ7-1"/>
    <property type="organism name" value="human"/>
</dbReference>
<dbReference type="AGR" id="HGNC:6356"/>
<dbReference type="CTD" id="51088"/>
<dbReference type="DisGeNET" id="51088"/>
<dbReference type="GeneCards" id="KLHL5"/>
<dbReference type="HGNC" id="HGNC:6356">
    <property type="gene designation" value="KLHL5"/>
</dbReference>
<dbReference type="HPA" id="ENSG00000109790">
    <property type="expression patterns" value="Low tissue specificity"/>
</dbReference>
<dbReference type="MIM" id="608064">
    <property type="type" value="gene"/>
</dbReference>
<dbReference type="neXtProt" id="NX_Q96PQ7"/>
<dbReference type="OpenTargets" id="ENSG00000109790"/>
<dbReference type="PharmGKB" id="PA30146"/>
<dbReference type="VEuPathDB" id="HostDB:ENSG00000109790"/>
<dbReference type="eggNOG" id="KOG4441">
    <property type="taxonomic scope" value="Eukaryota"/>
</dbReference>
<dbReference type="GeneTree" id="ENSGT00940000155358"/>
<dbReference type="HOGENOM" id="CLU_004253_12_0_1"/>
<dbReference type="InParanoid" id="Q96PQ7"/>
<dbReference type="OMA" id="LKIRWKW"/>
<dbReference type="OrthoDB" id="45365at2759"/>
<dbReference type="PAN-GO" id="Q96PQ7">
    <property type="GO annotations" value="0 GO annotations based on evolutionary models"/>
</dbReference>
<dbReference type="PhylomeDB" id="Q96PQ7"/>
<dbReference type="TreeFam" id="TF329218"/>
<dbReference type="PathwayCommons" id="Q96PQ7"/>
<dbReference type="Reactome" id="R-HSA-8951664">
    <property type="pathway name" value="Neddylation"/>
</dbReference>
<dbReference type="Reactome" id="R-HSA-983168">
    <property type="pathway name" value="Antigen processing: Ubiquitination &amp; Proteasome degradation"/>
</dbReference>
<dbReference type="SignaLink" id="Q96PQ7"/>
<dbReference type="BioGRID-ORCS" id="51088">
    <property type="hits" value="16 hits in 1196 CRISPR screens"/>
</dbReference>
<dbReference type="ChiTaRS" id="KLHL5">
    <property type="organism name" value="human"/>
</dbReference>
<dbReference type="GenomeRNAi" id="51088"/>
<dbReference type="Pharos" id="Q96PQ7">
    <property type="development level" value="Tdark"/>
</dbReference>
<dbReference type="PRO" id="PR:Q96PQ7"/>
<dbReference type="Proteomes" id="UP000005640">
    <property type="component" value="Chromosome 4"/>
</dbReference>
<dbReference type="RNAct" id="Q96PQ7">
    <property type="molecule type" value="protein"/>
</dbReference>
<dbReference type="Bgee" id="ENSG00000109790">
    <property type="expression patterns" value="Expressed in stromal cell of endometrium and 188 other cell types or tissues"/>
</dbReference>
<dbReference type="ExpressionAtlas" id="Q96PQ7">
    <property type="expression patterns" value="baseline and differential"/>
</dbReference>
<dbReference type="GO" id="GO:0031463">
    <property type="term" value="C:Cul3-RING ubiquitin ligase complex"/>
    <property type="evidence" value="ECO:0000318"/>
    <property type="project" value="GO_Central"/>
</dbReference>
<dbReference type="GO" id="GO:0005737">
    <property type="term" value="C:cytoplasm"/>
    <property type="evidence" value="ECO:0000318"/>
    <property type="project" value="GO_Central"/>
</dbReference>
<dbReference type="GO" id="GO:0005829">
    <property type="term" value="C:cytosol"/>
    <property type="evidence" value="ECO:0000304"/>
    <property type="project" value="Reactome"/>
</dbReference>
<dbReference type="GO" id="GO:0015630">
    <property type="term" value="C:microtubule cytoskeleton"/>
    <property type="evidence" value="ECO:0000314"/>
    <property type="project" value="HPA"/>
</dbReference>
<dbReference type="GO" id="GO:0005886">
    <property type="term" value="C:plasma membrane"/>
    <property type="evidence" value="ECO:0000314"/>
    <property type="project" value="HPA"/>
</dbReference>
<dbReference type="GO" id="GO:0003779">
    <property type="term" value="F:actin binding"/>
    <property type="evidence" value="ECO:0007669"/>
    <property type="project" value="UniProtKB-KW"/>
</dbReference>
<dbReference type="GO" id="GO:1990756">
    <property type="term" value="F:ubiquitin-like ligase-substrate adaptor activity"/>
    <property type="evidence" value="ECO:0000318"/>
    <property type="project" value="GO_Central"/>
</dbReference>
<dbReference type="GO" id="GO:0043161">
    <property type="term" value="P:proteasome-mediated ubiquitin-dependent protein catabolic process"/>
    <property type="evidence" value="ECO:0000318"/>
    <property type="project" value="GO_Central"/>
</dbReference>
<dbReference type="CDD" id="cd18511">
    <property type="entry name" value="BACK_KLHL5"/>
    <property type="match status" value="1"/>
</dbReference>
<dbReference type="CDD" id="cd18337">
    <property type="entry name" value="BTB_POZ_KLHL5"/>
    <property type="match status" value="1"/>
</dbReference>
<dbReference type="FunFam" id="1.25.40.420:FF:000001">
    <property type="entry name" value="Kelch-like family member 12"/>
    <property type="match status" value="1"/>
</dbReference>
<dbReference type="FunFam" id="2.120.10.80:FF:000017">
    <property type="entry name" value="kelch-like protein 1 isoform X2"/>
    <property type="match status" value="1"/>
</dbReference>
<dbReference type="FunFam" id="2.120.10.80:FF:000021">
    <property type="entry name" value="kelch-like protein 1 isoform X2"/>
    <property type="match status" value="1"/>
</dbReference>
<dbReference type="FunFam" id="3.30.710.10:FF:000027">
    <property type="entry name" value="Kelch-like protein 4 isoform 1"/>
    <property type="match status" value="1"/>
</dbReference>
<dbReference type="Gene3D" id="1.25.40.420">
    <property type="match status" value="1"/>
</dbReference>
<dbReference type="Gene3D" id="2.120.10.80">
    <property type="entry name" value="Kelch-type beta propeller"/>
    <property type="match status" value="2"/>
</dbReference>
<dbReference type="Gene3D" id="3.30.710.10">
    <property type="entry name" value="Potassium Channel Kv1.1, Chain A"/>
    <property type="match status" value="1"/>
</dbReference>
<dbReference type="InterPro" id="IPR011705">
    <property type="entry name" value="BACK"/>
</dbReference>
<dbReference type="InterPro" id="IPR056737">
    <property type="entry name" value="Beta-prop_ATRN-MKLN-like"/>
</dbReference>
<dbReference type="InterPro" id="IPR000210">
    <property type="entry name" value="BTB/POZ_dom"/>
</dbReference>
<dbReference type="InterPro" id="IPR015915">
    <property type="entry name" value="Kelch-typ_b-propeller"/>
</dbReference>
<dbReference type="InterPro" id="IPR006652">
    <property type="entry name" value="Kelch_1"/>
</dbReference>
<dbReference type="InterPro" id="IPR030606">
    <property type="entry name" value="KLHL5_BTB/POZ"/>
</dbReference>
<dbReference type="InterPro" id="IPR011333">
    <property type="entry name" value="SKP1/BTB/POZ_sf"/>
</dbReference>
<dbReference type="PANTHER" id="PTHR45632:SF3">
    <property type="entry name" value="KELCH-LIKE PROTEIN 32"/>
    <property type="match status" value="1"/>
</dbReference>
<dbReference type="PANTHER" id="PTHR45632">
    <property type="entry name" value="LD33804P"/>
    <property type="match status" value="1"/>
</dbReference>
<dbReference type="Pfam" id="PF07707">
    <property type="entry name" value="BACK"/>
    <property type="match status" value="1"/>
</dbReference>
<dbReference type="Pfam" id="PF24981">
    <property type="entry name" value="Beta-prop_ATRN-LZTR1"/>
    <property type="match status" value="1"/>
</dbReference>
<dbReference type="Pfam" id="PF00651">
    <property type="entry name" value="BTB"/>
    <property type="match status" value="1"/>
</dbReference>
<dbReference type="PRINTS" id="PR00501">
    <property type="entry name" value="KELCHREPEAT"/>
</dbReference>
<dbReference type="SMART" id="SM00875">
    <property type="entry name" value="BACK"/>
    <property type="match status" value="1"/>
</dbReference>
<dbReference type="SMART" id="SM00225">
    <property type="entry name" value="BTB"/>
    <property type="match status" value="1"/>
</dbReference>
<dbReference type="SMART" id="SM00612">
    <property type="entry name" value="Kelch"/>
    <property type="match status" value="6"/>
</dbReference>
<dbReference type="SUPFAM" id="SSF117281">
    <property type="entry name" value="Kelch motif"/>
    <property type="match status" value="2"/>
</dbReference>
<dbReference type="SUPFAM" id="SSF54695">
    <property type="entry name" value="POZ domain"/>
    <property type="match status" value="1"/>
</dbReference>
<dbReference type="PROSITE" id="PS50097">
    <property type="entry name" value="BTB"/>
    <property type="match status" value="1"/>
</dbReference>
<reference key="1">
    <citation type="journal article" date="2001" name="Biochem. Genet.">
        <title>Cloning and characterization of KLHL5, a novel human gene encoding a kelch-related protein with a BTB domain.</title>
        <authorList>
            <person name="Wang S."/>
            <person name="Zhou Z."/>
            <person name="Ying K."/>
            <person name="Tang R."/>
            <person name="Huang Y."/>
            <person name="Wu C."/>
            <person name="Xie Y."/>
            <person name="Mao Y."/>
        </authorList>
    </citation>
    <scope>NUCLEOTIDE SEQUENCE (ISOFORMS 1 AND 2)</scope>
    <scope>VARIANT LEU-10</scope>
    <source>
        <tissue>Fetal brain</tissue>
    </source>
</reference>
<reference key="2">
    <citation type="journal article" date="2003" name="Mol. Biol. Rep.">
        <title>Characterization of a novel splicing variant of KLHL5, a member of the kelch protein family.</title>
        <authorList>
            <person name="Xu J."/>
            <person name="Gu S."/>
            <person name="Wang S."/>
            <person name="Dai J."/>
            <person name="Ji C."/>
            <person name="Jin Y."/>
            <person name="Qian J."/>
            <person name="Wang L."/>
            <person name="Ye X."/>
            <person name="Xie Y."/>
            <person name="Mao Y."/>
        </authorList>
    </citation>
    <scope>NUCLEOTIDE SEQUENCE [MRNA] (ISOFORM 4)</scope>
    <scope>VARIANT LEU-10</scope>
    <scope>ALTERNATIVE SPLICING</scope>
    <source>
        <tissue>Fetal brain</tissue>
    </source>
</reference>
<reference key="3">
    <citation type="journal article" date="2004" name="Nat. Genet.">
        <title>Complete sequencing and characterization of 21,243 full-length human cDNAs.</title>
        <authorList>
            <person name="Ota T."/>
            <person name="Suzuki Y."/>
            <person name="Nishikawa T."/>
            <person name="Otsuki T."/>
            <person name="Sugiyama T."/>
            <person name="Irie R."/>
            <person name="Wakamatsu A."/>
            <person name="Hayashi K."/>
            <person name="Sato H."/>
            <person name="Nagai K."/>
            <person name="Kimura K."/>
            <person name="Makita H."/>
            <person name="Sekine M."/>
            <person name="Obayashi M."/>
            <person name="Nishi T."/>
            <person name="Shibahara T."/>
            <person name="Tanaka T."/>
            <person name="Ishii S."/>
            <person name="Yamamoto J."/>
            <person name="Saito K."/>
            <person name="Kawai Y."/>
            <person name="Isono Y."/>
            <person name="Nakamura Y."/>
            <person name="Nagahari K."/>
            <person name="Murakami K."/>
            <person name="Yasuda T."/>
            <person name="Iwayanagi T."/>
            <person name="Wagatsuma M."/>
            <person name="Shiratori A."/>
            <person name="Sudo H."/>
            <person name="Hosoiri T."/>
            <person name="Kaku Y."/>
            <person name="Kodaira H."/>
            <person name="Kondo H."/>
            <person name="Sugawara M."/>
            <person name="Takahashi M."/>
            <person name="Kanda K."/>
            <person name="Yokoi T."/>
            <person name="Furuya T."/>
            <person name="Kikkawa E."/>
            <person name="Omura Y."/>
            <person name="Abe K."/>
            <person name="Kamihara K."/>
            <person name="Katsuta N."/>
            <person name="Sato K."/>
            <person name="Tanikawa M."/>
            <person name="Yamazaki M."/>
            <person name="Ninomiya K."/>
            <person name="Ishibashi T."/>
            <person name="Yamashita H."/>
            <person name="Murakawa K."/>
            <person name="Fujimori K."/>
            <person name="Tanai H."/>
            <person name="Kimata M."/>
            <person name="Watanabe M."/>
            <person name="Hiraoka S."/>
            <person name="Chiba Y."/>
            <person name="Ishida S."/>
            <person name="Ono Y."/>
            <person name="Takiguchi S."/>
            <person name="Watanabe S."/>
            <person name="Yosida M."/>
            <person name="Hotuta T."/>
            <person name="Kusano J."/>
            <person name="Kanehori K."/>
            <person name="Takahashi-Fujii A."/>
            <person name="Hara H."/>
            <person name="Tanase T.-O."/>
            <person name="Nomura Y."/>
            <person name="Togiya S."/>
            <person name="Komai F."/>
            <person name="Hara R."/>
            <person name="Takeuchi K."/>
            <person name="Arita M."/>
            <person name="Imose N."/>
            <person name="Musashino K."/>
            <person name="Yuuki H."/>
            <person name="Oshima A."/>
            <person name="Sasaki N."/>
            <person name="Aotsuka S."/>
            <person name="Yoshikawa Y."/>
            <person name="Matsunawa H."/>
            <person name="Ichihara T."/>
            <person name="Shiohata N."/>
            <person name="Sano S."/>
            <person name="Moriya S."/>
            <person name="Momiyama H."/>
            <person name="Satoh N."/>
            <person name="Takami S."/>
            <person name="Terashima Y."/>
            <person name="Suzuki O."/>
            <person name="Nakagawa S."/>
            <person name="Senoh A."/>
            <person name="Mizoguchi H."/>
            <person name="Goto Y."/>
            <person name="Shimizu F."/>
            <person name="Wakebe H."/>
            <person name="Hishigaki H."/>
            <person name="Watanabe T."/>
            <person name="Sugiyama A."/>
            <person name="Takemoto M."/>
            <person name="Kawakami B."/>
            <person name="Yamazaki M."/>
            <person name="Watanabe K."/>
            <person name="Kumagai A."/>
            <person name="Itakura S."/>
            <person name="Fukuzumi Y."/>
            <person name="Fujimori Y."/>
            <person name="Komiyama M."/>
            <person name="Tashiro H."/>
            <person name="Tanigami A."/>
            <person name="Fujiwara T."/>
            <person name="Ono T."/>
            <person name="Yamada K."/>
            <person name="Fujii Y."/>
            <person name="Ozaki K."/>
            <person name="Hirao M."/>
            <person name="Ohmori Y."/>
            <person name="Kawabata A."/>
            <person name="Hikiji T."/>
            <person name="Kobatake N."/>
            <person name="Inagaki H."/>
            <person name="Ikema Y."/>
            <person name="Okamoto S."/>
            <person name="Okitani R."/>
            <person name="Kawakami T."/>
            <person name="Noguchi S."/>
            <person name="Itoh T."/>
            <person name="Shigeta K."/>
            <person name="Senba T."/>
            <person name="Matsumura K."/>
            <person name="Nakajima Y."/>
            <person name="Mizuno T."/>
            <person name="Morinaga M."/>
            <person name="Sasaki M."/>
            <person name="Togashi T."/>
            <person name="Oyama M."/>
            <person name="Hata H."/>
            <person name="Watanabe M."/>
            <person name="Komatsu T."/>
            <person name="Mizushima-Sugano J."/>
            <person name="Satoh T."/>
            <person name="Shirai Y."/>
            <person name="Takahashi Y."/>
            <person name="Nakagawa K."/>
            <person name="Okumura K."/>
            <person name="Nagase T."/>
            <person name="Nomura N."/>
            <person name="Kikuchi H."/>
            <person name="Masuho Y."/>
            <person name="Yamashita R."/>
            <person name="Nakai K."/>
            <person name="Yada T."/>
            <person name="Nakamura Y."/>
            <person name="Ohara O."/>
            <person name="Isogai T."/>
            <person name="Sugano S."/>
        </authorList>
    </citation>
    <scope>NUCLEOTIDE SEQUENCE [LARGE SCALE MRNA] (ISOFORM 1)</scope>
    <scope>NUCLEOTIDE SEQUENCE [LARGE SCALE MRNA] OF 476-755 (ISOFORM 2)</scope>
    <scope>VARIANT LEU-10</scope>
    <source>
        <tissue>Brain</tissue>
        <tissue>Placenta</tissue>
    </source>
</reference>
<reference key="4">
    <citation type="journal article" date="2005" name="Nature">
        <title>Generation and annotation of the DNA sequences of human chromosomes 2 and 4.</title>
        <authorList>
            <person name="Hillier L.W."/>
            <person name="Graves T.A."/>
            <person name="Fulton R.S."/>
            <person name="Fulton L.A."/>
            <person name="Pepin K.H."/>
            <person name="Minx P."/>
            <person name="Wagner-McPherson C."/>
            <person name="Layman D."/>
            <person name="Wylie K."/>
            <person name="Sekhon M."/>
            <person name="Becker M.C."/>
            <person name="Fewell G.A."/>
            <person name="Delehaunty K.D."/>
            <person name="Miner T.L."/>
            <person name="Nash W.E."/>
            <person name="Kremitzki C."/>
            <person name="Oddy L."/>
            <person name="Du H."/>
            <person name="Sun H."/>
            <person name="Bradshaw-Cordum H."/>
            <person name="Ali J."/>
            <person name="Carter J."/>
            <person name="Cordes M."/>
            <person name="Harris A."/>
            <person name="Isak A."/>
            <person name="van Brunt A."/>
            <person name="Nguyen C."/>
            <person name="Du F."/>
            <person name="Courtney L."/>
            <person name="Kalicki J."/>
            <person name="Ozersky P."/>
            <person name="Abbott S."/>
            <person name="Armstrong J."/>
            <person name="Belter E.A."/>
            <person name="Caruso L."/>
            <person name="Cedroni M."/>
            <person name="Cotton M."/>
            <person name="Davidson T."/>
            <person name="Desai A."/>
            <person name="Elliott G."/>
            <person name="Erb T."/>
            <person name="Fronick C."/>
            <person name="Gaige T."/>
            <person name="Haakenson W."/>
            <person name="Haglund K."/>
            <person name="Holmes A."/>
            <person name="Harkins R."/>
            <person name="Kim K."/>
            <person name="Kruchowski S.S."/>
            <person name="Strong C.M."/>
            <person name="Grewal N."/>
            <person name="Goyea E."/>
            <person name="Hou S."/>
            <person name="Levy A."/>
            <person name="Martinka S."/>
            <person name="Mead K."/>
            <person name="McLellan M.D."/>
            <person name="Meyer R."/>
            <person name="Randall-Maher J."/>
            <person name="Tomlinson C."/>
            <person name="Dauphin-Kohlberg S."/>
            <person name="Kozlowicz-Reilly A."/>
            <person name="Shah N."/>
            <person name="Swearengen-Shahid S."/>
            <person name="Snider J."/>
            <person name="Strong J.T."/>
            <person name="Thompson J."/>
            <person name="Yoakum M."/>
            <person name="Leonard S."/>
            <person name="Pearman C."/>
            <person name="Trani L."/>
            <person name="Radionenko M."/>
            <person name="Waligorski J.E."/>
            <person name="Wang C."/>
            <person name="Rock S.M."/>
            <person name="Tin-Wollam A.-M."/>
            <person name="Maupin R."/>
            <person name="Latreille P."/>
            <person name="Wendl M.C."/>
            <person name="Yang S.-P."/>
            <person name="Pohl C."/>
            <person name="Wallis J.W."/>
            <person name="Spieth J."/>
            <person name="Bieri T.A."/>
            <person name="Berkowicz N."/>
            <person name="Nelson J.O."/>
            <person name="Osborne J."/>
            <person name="Ding L."/>
            <person name="Meyer R."/>
            <person name="Sabo A."/>
            <person name="Shotland Y."/>
            <person name="Sinha P."/>
            <person name="Wohldmann P.E."/>
            <person name="Cook L.L."/>
            <person name="Hickenbotham M.T."/>
            <person name="Eldred J."/>
            <person name="Williams D."/>
            <person name="Jones T.A."/>
            <person name="She X."/>
            <person name="Ciccarelli F.D."/>
            <person name="Izaurralde E."/>
            <person name="Taylor J."/>
            <person name="Schmutz J."/>
            <person name="Myers R.M."/>
            <person name="Cox D.R."/>
            <person name="Huang X."/>
            <person name="McPherson J.D."/>
            <person name="Mardis E.R."/>
            <person name="Clifton S.W."/>
            <person name="Warren W.C."/>
            <person name="Chinwalla A.T."/>
            <person name="Eddy S.R."/>
            <person name="Marra M.A."/>
            <person name="Ovcharenko I."/>
            <person name="Furey T.S."/>
            <person name="Miller W."/>
            <person name="Eichler E.E."/>
            <person name="Bork P."/>
            <person name="Suyama M."/>
            <person name="Torrents D."/>
            <person name="Waterston R.H."/>
            <person name="Wilson R.K."/>
        </authorList>
    </citation>
    <scope>NUCLEOTIDE SEQUENCE [LARGE SCALE GENOMIC DNA]</scope>
</reference>
<reference key="5">
    <citation type="submission" date="2005-07" db="EMBL/GenBank/DDBJ databases">
        <authorList>
            <person name="Mural R.J."/>
            <person name="Istrail S."/>
            <person name="Sutton G.G."/>
            <person name="Florea L."/>
            <person name="Halpern A.L."/>
            <person name="Mobarry C.M."/>
            <person name="Lippert R."/>
            <person name="Walenz B."/>
            <person name="Shatkay H."/>
            <person name="Dew I."/>
            <person name="Miller J.R."/>
            <person name="Flanigan M.J."/>
            <person name="Edwards N.J."/>
            <person name="Bolanos R."/>
            <person name="Fasulo D."/>
            <person name="Halldorsson B.V."/>
            <person name="Hannenhalli S."/>
            <person name="Turner R."/>
            <person name="Yooseph S."/>
            <person name="Lu F."/>
            <person name="Nusskern D.R."/>
            <person name="Shue B.C."/>
            <person name="Zheng X.H."/>
            <person name="Zhong F."/>
            <person name="Delcher A.L."/>
            <person name="Huson D.H."/>
            <person name="Kravitz S.A."/>
            <person name="Mouchard L."/>
            <person name="Reinert K."/>
            <person name="Remington K.A."/>
            <person name="Clark A.G."/>
            <person name="Waterman M.S."/>
            <person name="Eichler E.E."/>
            <person name="Adams M.D."/>
            <person name="Hunkapiller M.W."/>
            <person name="Myers E.W."/>
            <person name="Venter J.C."/>
        </authorList>
    </citation>
    <scope>NUCLEOTIDE SEQUENCE [LARGE SCALE GENOMIC DNA]</scope>
    <scope>VARIANT LEU-10</scope>
</reference>
<reference key="6">
    <citation type="journal article" date="2004" name="Genome Res.">
        <title>The status, quality, and expansion of the NIH full-length cDNA project: the Mammalian Gene Collection (MGC).</title>
        <authorList>
            <consortium name="The MGC Project Team"/>
        </authorList>
    </citation>
    <scope>NUCLEOTIDE SEQUENCE [LARGE SCALE MRNA] OF 383-755 (ISOFORM 1)</scope>
    <source>
        <tissue>Uterus</tissue>
    </source>
</reference>
<reference key="7">
    <citation type="submission" date="1999-01" db="EMBL/GenBank/DDBJ databases">
        <authorList>
            <person name="Jiyi Y."/>
            <person name="Lianxian C."/>
            <person name="Zhengjian Z."/>
            <person name="Bo Y."/>
        </authorList>
    </citation>
    <scope>NUCLEOTIDE SEQUENCE [MRNA] OF 490-755 (ISOFORM 3)</scope>
    <source>
        <tissue>Tonsil</tissue>
    </source>
</reference>
<evidence type="ECO:0000255" key="1">
    <source>
        <dbReference type="PROSITE-ProRule" id="PRU00037"/>
    </source>
</evidence>
<evidence type="ECO:0000256" key="2">
    <source>
        <dbReference type="SAM" id="MobiDB-lite"/>
    </source>
</evidence>
<evidence type="ECO:0000269" key="3">
    <source>
    </source>
</evidence>
<evidence type="ECO:0000269" key="4">
    <source>
    </source>
</evidence>
<evidence type="ECO:0000269" key="5">
    <source>
    </source>
</evidence>
<evidence type="ECO:0000269" key="6">
    <source ref="5"/>
</evidence>
<evidence type="ECO:0000303" key="7">
    <source>
    </source>
</evidence>
<evidence type="ECO:0000303" key="8">
    <source>
    </source>
</evidence>
<evidence type="ECO:0000303" key="9">
    <source ref="7"/>
</evidence>
<evidence type="ECO:0000305" key="10"/>
<accession>Q96PQ7</accession>
<accession>A8K170</accession>
<accession>B7WP68</accession>
<accession>E9PCF4</accession>
<accession>F8WAE7</accession>
<accession>G3XA92</accession>
<accession>Q6Y881</accession>
<accession>Q86XW0</accession>
<accession>Q9NUK3</accession>
<accession>Q9NV27</accession>
<accession>Q9NVA9</accession>
<accession>Q9Y2X2</accession>
<gene>
    <name type="primary">KLHL5</name>
</gene>